<proteinExistence type="inferred from homology"/>
<feature type="chain" id="PRO_0000081119" description="Regulatory protein LuxO">
    <location>
        <begin position="1"/>
        <end position="453"/>
    </location>
</feature>
<feature type="domain" description="Response regulatory" evidence="2">
    <location>
        <begin position="1"/>
        <end position="112"/>
    </location>
</feature>
<feature type="domain" description="Sigma-54 factor interaction" evidence="3">
    <location>
        <begin position="133"/>
        <end position="362"/>
    </location>
</feature>
<feature type="binding site" evidence="3">
    <location>
        <begin position="161"/>
        <end position="168"/>
    </location>
    <ligand>
        <name>ATP</name>
        <dbReference type="ChEBI" id="CHEBI:30616"/>
    </ligand>
</feature>
<feature type="binding site" evidence="3">
    <location>
        <begin position="224"/>
        <end position="233"/>
    </location>
    <ligand>
        <name>ATP</name>
        <dbReference type="ChEBI" id="CHEBI:30616"/>
    </ligand>
</feature>
<feature type="modified residue" description="4-aspartylphosphate" evidence="2">
    <location>
        <position position="47"/>
    </location>
</feature>
<reference key="1">
    <citation type="submission" date="2002-12" db="EMBL/GenBank/DDBJ databases">
        <title>Complete genome sequence of Vibrio vulnificus CMCP6.</title>
        <authorList>
            <person name="Rhee J.H."/>
            <person name="Kim S.Y."/>
            <person name="Chung S.S."/>
            <person name="Kim J.J."/>
            <person name="Moon Y.H."/>
            <person name="Jeong H."/>
            <person name="Choy H.E."/>
        </authorList>
    </citation>
    <scope>NUCLEOTIDE SEQUENCE [LARGE SCALE GENOMIC DNA]</scope>
    <source>
        <strain>CMCP6</strain>
    </source>
</reference>
<accession>Q8CWJ5</accession>
<comment type="function">
    <text evidence="1">Involved in the regulation of different processes depending on the cell density. Acts together with sigma-54 to repress, perhaps indirectly, some genes (By similarity).</text>
</comment>
<gene>
    <name type="primary">luxO</name>
    <name type="ordered locus">VV1_3091</name>
</gene>
<protein>
    <recommendedName>
        <fullName>Regulatory protein LuxO</fullName>
    </recommendedName>
</protein>
<sequence>MVEDTASVAALYRSYLMPLGIDINIVGTGRDAIDSLKHRIPDLILLDLRLPDMTGMDVLHAVKASHPDVPIIFMTAHGSIDTAVEAMRHGSQDFLIKPCEADRLRVTVNNAIRKASKLKNDADSAGSQNYQGFIGSSQKMQQVYRTIDSAASSKASIFITGESGTGKEVCAEAIHAASRRGDKPFIAINCAAIPKDLIESELFGHVKGAFTGAATDRQGAAELADGGTLFLDELCEMDLDLQTKLLRFIQTGTFQKVGSSKMKSVDVRFVCATNRDPWKEVQEGRFREDLYYRLYVIPLHLPPLRERGEDVIEIAYSLLGYMSHEEGKNFVRFSQPVIDRFNEYEWPGNVRQLQNVLRNVVVLNNGKEITMEMLPPPLNQPFERKESVQPDLSELISVRDICPLWLTEKLAIEQAIKACDGNIPRAAGYLDVSPSTIYRKLQAWNEKEEKQKA</sequence>
<keyword id="KW-0067">ATP-binding</keyword>
<keyword id="KW-0238">DNA-binding</keyword>
<keyword id="KW-0547">Nucleotide-binding</keyword>
<keyword id="KW-0597">Phosphoprotein</keyword>
<keyword id="KW-0678">Repressor</keyword>
<keyword id="KW-0804">Transcription</keyword>
<keyword id="KW-0805">Transcription regulation</keyword>
<keyword id="KW-0902">Two-component regulatory system</keyword>
<evidence type="ECO:0000250" key="1"/>
<evidence type="ECO:0000255" key="2">
    <source>
        <dbReference type="PROSITE-ProRule" id="PRU00169"/>
    </source>
</evidence>
<evidence type="ECO:0000255" key="3">
    <source>
        <dbReference type="PROSITE-ProRule" id="PRU00193"/>
    </source>
</evidence>
<dbReference type="EMBL" id="AE016795">
    <property type="protein sequence ID" value="AAO11414.2"/>
    <property type="molecule type" value="Genomic_DNA"/>
</dbReference>
<dbReference type="SMR" id="Q8CWJ5"/>
<dbReference type="KEGG" id="vvu:VV1_3091"/>
<dbReference type="HOGENOM" id="CLU_000445_0_6_6"/>
<dbReference type="Proteomes" id="UP000002275">
    <property type="component" value="Chromosome 1"/>
</dbReference>
<dbReference type="GO" id="GO:0005524">
    <property type="term" value="F:ATP binding"/>
    <property type="evidence" value="ECO:0007669"/>
    <property type="project" value="UniProtKB-KW"/>
</dbReference>
<dbReference type="GO" id="GO:0016887">
    <property type="term" value="F:ATP hydrolysis activity"/>
    <property type="evidence" value="ECO:0007669"/>
    <property type="project" value="InterPro"/>
</dbReference>
<dbReference type="GO" id="GO:0043565">
    <property type="term" value="F:sequence-specific DNA binding"/>
    <property type="evidence" value="ECO:0007669"/>
    <property type="project" value="InterPro"/>
</dbReference>
<dbReference type="GO" id="GO:0000160">
    <property type="term" value="P:phosphorelay signal transduction system"/>
    <property type="evidence" value="ECO:0007669"/>
    <property type="project" value="UniProtKB-KW"/>
</dbReference>
<dbReference type="GO" id="GO:0006355">
    <property type="term" value="P:regulation of DNA-templated transcription"/>
    <property type="evidence" value="ECO:0007669"/>
    <property type="project" value="InterPro"/>
</dbReference>
<dbReference type="CDD" id="cd00009">
    <property type="entry name" value="AAA"/>
    <property type="match status" value="1"/>
</dbReference>
<dbReference type="CDD" id="cd17572">
    <property type="entry name" value="REC_NtrC1-like"/>
    <property type="match status" value="1"/>
</dbReference>
<dbReference type="FunFam" id="3.40.50.300:FF:000006">
    <property type="entry name" value="DNA-binding transcriptional regulator NtrC"/>
    <property type="match status" value="1"/>
</dbReference>
<dbReference type="FunFam" id="1.10.10.60:FF:000343">
    <property type="entry name" value="Sigma-54-dependent Fis family transcriptional regulator"/>
    <property type="match status" value="1"/>
</dbReference>
<dbReference type="FunFam" id="1.10.8.60:FF:000120">
    <property type="entry name" value="Sigma-54-dependent Fis family transcriptional regulator"/>
    <property type="match status" value="1"/>
</dbReference>
<dbReference type="FunFam" id="3.40.50.2300:FF:000225">
    <property type="entry name" value="Sigma-54-dependent Fis family transcriptional regulator"/>
    <property type="match status" value="1"/>
</dbReference>
<dbReference type="Gene3D" id="1.10.8.60">
    <property type="match status" value="1"/>
</dbReference>
<dbReference type="Gene3D" id="3.40.50.2300">
    <property type="match status" value="1"/>
</dbReference>
<dbReference type="Gene3D" id="1.10.10.60">
    <property type="entry name" value="Homeodomain-like"/>
    <property type="match status" value="1"/>
</dbReference>
<dbReference type="Gene3D" id="3.40.50.300">
    <property type="entry name" value="P-loop containing nucleotide triphosphate hydrolases"/>
    <property type="match status" value="1"/>
</dbReference>
<dbReference type="InterPro" id="IPR003593">
    <property type="entry name" value="AAA+_ATPase"/>
</dbReference>
<dbReference type="InterPro" id="IPR011006">
    <property type="entry name" value="CheY-like_superfamily"/>
</dbReference>
<dbReference type="InterPro" id="IPR009057">
    <property type="entry name" value="Homeodomain-like_sf"/>
</dbReference>
<dbReference type="InterPro" id="IPR002197">
    <property type="entry name" value="HTH_Fis"/>
</dbReference>
<dbReference type="InterPro" id="IPR027417">
    <property type="entry name" value="P-loop_NTPase"/>
</dbReference>
<dbReference type="InterPro" id="IPR053402">
    <property type="entry name" value="QS_regulatory_LuxO"/>
</dbReference>
<dbReference type="InterPro" id="IPR001789">
    <property type="entry name" value="Sig_transdc_resp-reg_receiver"/>
</dbReference>
<dbReference type="InterPro" id="IPR002078">
    <property type="entry name" value="Sigma_54_int"/>
</dbReference>
<dbReference type="InterPro" id="IPR025943">
    <property type="entry name" value="Sigma_54_int_dom_ATP-bd_2"/>
</dbReference>
<dbReference type="InterPro" id="IPR025944">
    <property type="entry name" value="Sigma_54_int_dom_CS"/>
</dbReference>
<dbReference type="NCBIfam" id="NF041946">
    <property type="entry name" value="LuxO_transreg_Vib"/>
    <property type="match status" value="1"/>
</dbReference>
<dbReference type="PANTHER" id="PTHR32071:SF117">
    <property type="entry name" value="PTS-DEPENDENT DIHYDROXYACETONE KINASE OPERON REGULATORY PROTEIN-RELATED"/>
    <property type="match status" value="1"/>
</dbReference>
<dbReference type="PANTHER" id="PTHR32071">
    <property type="entry name" value="TRANSCRIPTIONAL REGULATORY PROTEIN"/>
    <property type="match status" value="1"/>
</dbReference>
<dbReference type="Pfam" id="PF02954">
    <property type="entry name" value="HTH_8"/>
    <property type="match status" value="1"/>
</dbReference>
<dbReference type="Pfam" id="PF00072">
    <property type="entry name" value="Response_reg"/>
    <property type="match status" value="1"/>
</dbReference>
<dbReference type="Pfam" id="PF00158">
    <property type="entry name" value="Sigma54_activat"/>
    <property type="match status" value="1"/>
</dbReference>
<dbReference type="SMART" id="SM00382">
    <property type="entry name" value="AAA"/>
    <property type="match status" value="1"/>
</dbReference>
<dbReference type="SMART" id="SM00448">
    <property type="entry name" value="REC"/>
    <property type="match status" value="1"/>
</dbReference>
<dbReference type="SUPFAM" id="SSF52172">
    <property type="entry name" value="CheY-like"/>
    <property type="match status" value="1"/>
</dbReference>
<dbReference type="SUPFAM" id="SSF46689">
    <property type="entry name" value="Homeodomain-like"/>
    <property type="match status" value="1"/>
</dbReference>
<dbReference type="SUPFAM" id="SSF52540">
    <property type="entry name" value="P-loop containing nucleoside triphosphate hydrolases"/>
    <property type="match status" value="1"/>
</dbReference>
<dbReference type="PROSITE" id="PS50110">
    <property type="entry name" value="RESPONSE_REGULATORY"/>
    <property type="match status" value="1"/>
</dbReference>
<dbReference type="PROSITE" id="PS00676">
    <property type="entry name" value="SIGMA54_INTERACT_2"/>
    <property type="match status" value="1"/>
</dbReference>
<dbReference type="PROSITE" id="PS00688">
    <property type="entry name" value="SIGMA54_INTERACT_3"/>
    <property type="match status" value="1"/>
</dbReference>
<dbReference type="PROSITE" id="PS50045">
    <property type="entry name" value="SIGMA54_INTERACT_4"/>
    <property type="match status" value="1"/>
</dbReference>
<organism>
    <name type="scientific">Vibrio vulnificus (strain CMCP6)</name>
    <dbReference type="NCBI Taxonomy" id="216895"/>
    <lineage>
        <taxon>Bacteria</taxon>
        <taxon>Pseudomonadati</taxon>
        <taxon>Pseudomonadota</taxon>
        <taxon>Gammaproteobacteria</taxon>
        <taxon>Vibrionales</taxon>
        <taxon>Vibrionaceae</taxon>
        <taxon>Vibrio</taxon>
    </lineage>
</organism>
<name>LUXO_VIBVU</name>